<evidence type="ECO:0000305" key="1">
    <source>
    </source>
</evidence>
<gene>
    <name type="ordered locus">YAR060C</name>
</gene>
<comment type="caution">
    <text evidence="1">Product of a dubious gene prediction unlikely to encode a functional protein. Because of that it is not part of the S.cerevisiae S288c complete/reference proteome set.</text>
</comment>
<feature type="chain" id="PRO_0000202430" description="Putative uncharacterized protein YAR060C">
    <location>
        <begin position="1"/>
        <end position="111"/>
    </location>
</feature>
<organism>
    <name type="scientific">Saccharomyces cerevisiae (strain ATCC 204508 / S288c)</name>
    <name type="common">Baker's yeast</name>
    <dbReference type="NCBI Taxonomy" id="559292"/>
    <lineage>
        <taxon>Eukaryota</taxon>
        <taxon>Fungi</taxon>
        <taxon>Dikarya</taxon>
        <taxon>Ascomycota</taxon>
        <taxon>Saccharomycotina</taxon>
        <taxon>Saccharomycetes</taxon>
        <taxon>Saccharomycetales</taxon>
        <taxon>Saccharomycetaceae</taxon>
        <taxon>Saccharomyces</taxon>
    </lineage>
</organism>
<dbReference type="EMBL" id="L28920">
    <property type="protein sequence ID" value="AAC09501.1"/>
    <property type="molecule type" value="Genomic_DNA"/>
</dbReference>
<dbReference type="PIR" id="S48993">
    <property type="entry name" value="S48993"/>
</dbReference>
<dbReference type="STRING" id="4932.YAR060C"/>
<dbReference type="PaxDb" id="4932-YAR060C"/>
<dbReference type="EnsemblFungi" id="YAR060C_mRNA">
    <property type="protein sequence ID" value="YAR060C"/>
    <property type="gene ID" value="YAR060C"/>
</dbReference>
<dbReference type="EnsemblFungi" id="YHR212C_mRNA">
    <property type="protein sequence ID" value="YHR212C"/>
    <property type="gene ID" value="YHR212C"/>
</dbReference>
<dbReference type="AGR" id="SGD:S000000086"/>
<dbReference type="SGD" id="S000000086">
    <property type="gene designation" value="YAR060C"/>
</dbReference>
<dbReference type="HOGENOM" id="CLU_2160369_0_0_1"/>
<dbReference type="ExpressionAtlas" id="P0CX88">
    <property type="expression patterns" value="baseline"/>
</dbReference>
<protein>
    <recommendedName>
        <fullName>Putative uncharacterized protein YAR060C</fullName>
    </recommendedName>
</protein>
<proteinExistence type="uncertain"/>
<accession>P0CX88</accession>
<accession>P38895</accession>
<name>YAN0_YEAST</name>
<sequence>MSKTDVKKSREASGILTLQVNLRERRNFLNLMQNKLFSWKIRFSAIKGKCSQKSKYFRRSRSEDCYVEADLKILSRTRRSRKLPGTVPDFLGKQLIGISSSVVSRVSRSCR</sequence>
<reference key="1">
    <citation type="journal article" date="1995" name="Proc. Natl. Acad. Sci. U.S.A.">
        <title>The nucleotide sequence of chromosome I from Saccharomyces cerevisiae.</title>
        <authorList>
            <person name="Bussey H."/>
            <person name="Kaback D.B."/>
            <person name="Zhong W.-W."/>
            <person name="Vo D.H."/>
            <person name="Clark M.W."/>
            <person name="Fortin N."/>
            <person name="Hall J."/>
            <person name="Ouellette B.F.F."/>
            <person name="Keng T."/>
            <person name="Barton A.B."/>
            <person name="Su Y."/>
            <person name="Davies C.J."/>
            <person name="Storms R.K."/>
        </authorList>
    </citation>
    <scope>NUCLEOTIDE SEQUENCE [LARGE SCALE GENOMIC DNA]</scope>
    <source>
        <strain>ATCC 204508 / S288c</strain>
    </source>
</reference>
<reference key="2">
    <citation type="journal article" date="2014" name="G3 (Bethesda)">
        <title>The reference genome sequence of Saccharomyces cerevisiae: Then and now.</title>
        <authorList>
            <person name="Engel S.R."/>
            <person name="Dietrich F.S."/>
            <person name="Fisk D.G."/>
            <person name="Binkley G."/>
            <person name="Balakrishnan R."/>
            <person name="Costanzo M.C."/>
            <person name="Dwight S.S."/>
            <person name="Hitz B.C."/>
            <person name="Karra K."/>
            <person name="Nash R.S."/>
            <person name="Weng S."/>
            <person name="Wong E.D."/>
            <person name="Lloyd P."/>
            <person name="Skrzypek M.S."/>
            <person name="Miyasato S.R."/>
            <person name="Simison M."/>
            <person name="Cherry J.M."/>
        </authorList>
    </citation>
    <scope>GENOME REANNOTATION</scope>
    <source>
        <strain>ATCC 204508 / S288c</strain>
    </source>
</reference>